<protein>
    <recommendedName>
        <fullName>Putative peroxiredoxin ycf42</fullName>
        <ecNumber>1.11.1.-</ecNumber>
    </recommendedName>
    <alternativeName>
        <fullName>Thioredoxin peroxidase</fullName>
    </alternativeName>
</protein>
<keyword id="KW-0049">Antioxidant</keyword>
<keyword id="KW-0150">Chloroplast</keyword>
<keyword id="KW-0560">Oxidoreductase</keyword>
<keyword id="KW-0575">Peroxidase</keyword>
<keyword id="KW-0934">Plastid</keyword>
<keyword id="KW-0676">Redox-active center</keyword>
<feature type="chain" id="PRO_0000135146" description="Putative peroxiredoxin ycf42">
    <location>
        <begin position="1"/>
        <end position="204"/>
    </location>
</feature>
<feature type="domain" description="Thioredoxin" evidence="2">
    <location>
        <begin position="5"/>
        <end position="163"/>
    </location>
</feature>
<dbReference type="EC" id="1.11.1.-"/>
<dbReference type="EMBL" id="Z67753">
    <property type="protein sequence ID" value="CAA91672.1"/>
    <property type="molecule type" value="Genomic_DNA"/>
</dbReference>
<dbReference type="PIR" id="S78299">
    <property type="entry name" value="S78299"/>
</dbReference>
<dbReference type="RefSeq" id="NP_043640.1">
    <property type="nucleotide sequence ID" value="NC_001713.1"/>
</dbReference>
<dbReference type="SMR" id="P49537"/>
<dbReference type="PeroxiBase" id="11135">
    <property type="entry name" value="Osin2CysPrx"/>
</dbReference>
<dbReference type="GeneID" id="801691"/>
<dbReference type="GO" id="GO:0009507">
    <property type="term" value="C:chloroplast"/>
    <property type="evidence" value="ECO:0007669"/>
    <property type="project" value="UniProtKB-SubCell"/>
</dbReference>
<dbReference type="GO" id="GO:0005829">
    <property type="term" value="C:cytosol"/>
    <property type="evidence" value="ECO:0007669"/>
    <property type="project" value="TreeGrafter"/>
</dbReference>
<dbReference type="GO" id="GO:0008379">
    <property type="term" value="F:thioredoxin peroxidase activity"/>
    <property type="evidence" value="ECO:0007669"/>
    <property type="project" value="TreeGrafter"/>
</dbReference>
<dbReference type="GO" id="GO:0045454">
    <property type="term" value="P:cell redox homeostasis"/>
    <property type="evidence" value="ECO:0007669"/>
    <property type="project" value="TreeGrafter"/>
</dbReference>
<dbReference type="GO" id="GO:0033554">
    <property type="term" value="P:cellular response to stress"/>
    <property type="evidence" value="ECO:0007669"/>
    <property type="project" value="TreeGrafter"/>
</dbReference>
<dbReference type="GO" id="GO:0042744">
    <property type="term" value="P:hydrogen peroxide catabolic process"/>
    <property type="evidence" value="ECO:0007669"/>
    <property type="project" value="TreeGrafter"/>
</dbReference>
<dbReference type="GO" id="GO:0006979">
    <property type="term" value="P:response to oxidative stress"/>
    <property type="evidence" value="ECO:0007669"/>
    <property type="project" value="TreeGrafter"/>
</dbReference>
<dbReference type="CDD" id="cd03015">
    <property type="entry name" value="PRX_Typ2cys"/>
    <property type="match status" value="1"/>
</dbReference>
<dbReference type="Gene3D" id="3.40.30.10">
    <property type="entry name" value="Glutaredoxin"/>
    <property type="match status" value="1"/>
</dbReference>
<dbReference type="InterPro" id="IPR000866">
    <property type="entry name" value="AhpC/TSA"/>
</dbReference>
<dbReference type="InterPro" id="IPR050217">
    <property type="entry name" value="Peroxiredoxin"/>
</dbReference>
<dbReference type="InterPro" id="IPR024706">
    <property type="entry name" value="Peroxiredoxin_AhpC-typ"/>
</dbReference>
<dbReference type="InterPro" id="IPR036249">
    <property type="entry name" value="Thioredoxin-like_sf"/>
</dbReference>
<dbReference type="InterPro" id="IPR013766">
    <property type="entry name" value="Thioredoxin_domain"/>
</dbReference>
<dbReference type="PANTHER" id="PTHR10681">
    <property type="entry name" value="THIOREDOXIN PEROXIDASE"/>
    <property type="match status" value="1"/>
</dbReference>
<dbReference type="PANTHER" id="PTHR10681:SF128">
    <property type="entry name" value="THIOREDOXIN-DEPENDENT PEROXIDE REDUCTASE, MITOCHONDRIAL"/>
    <property type="match status" value="1"/>
</dbReference>
<dbReference type="Pfam" id="PF00578">
    <property type="entry name" value="AhpC-TSA"/>
    <property type="match status" value="1"/>
</dbReference>
<dbReference type="PIRSF" id="PIRSF000239">
    <property type="entry name" value="AHPC"/>
    <property type="match status" value="1"/>
</dbReference>
<dbReference type="SUPFAM" id="SSF52833">
    <property type="entry name" value="Thioredoxin-like"/>
    <property type="match status" value="1"/>
</dbReference>
<dbReference type="PROSITE" id="PS51352">
    <property type="entry name" value="THIOREDOXIN_2"/>
    <property type="match status" value="1"/>
</dbReference>
<reference key="1">
    <citation type="journal article" date="1995" name="Plant Mol. Biol. Rep.">
        <title>The chloroplast genome of a chlorophyll a+c-containing alga, Odontella sinensis.</title>
        <authorList>
            <person name="Kowallik K.V."/>
            <person name="Stoebe B."/>
            <person name="Schaffran I."/>
            <person name="Kroth-Pancic P."/>
            <person name="Freier U."/>
        </authorList>
    </citation>
    <scope>NUCLEOTIDE SEQUENCE [LARGE SCALE GENOMIC DNA]</scope>
</reference>
<organism>
    <name type="scientific">Trieres chinensis</name>
    <name type="common">Marine centric diatom</name>
    <name type="synonym">Odontella sinensis</name>
    <dbReference type="NCBI Taxonomy" id="1514140"/>
    <lineage>
        <taxon>Eukaryota</taxon>
        <taxon>Sar</taxon>
        <taxon>Stramenopiles</taxon>
        <taxon>Ochrophyta</taxon>
        <taxon>Bacillariophyta</taxon>
        <taxon>Mediophyceae</taxon>
        <taxon>Biddulphiophycidae</taxon>
        <taxon>Eupodiscales</taxon>
        <taxon>Parodontellaceae</taxon>
        <taxon>Trieres</taxon>
    </lineage>
</organism>
<comment type="catalytic activity">
    <reaction>
        <text>a hydroperoxide + [protein]-dithiol = [protein]-disulfide + an alcohol + H2O</text>
        <dbReference type="Rhea" id="RHEA:10008"/>
        <dbReference type="Rhea" id="RHEA-COMP:10593"/>
        <dbReference type="Rhea" id="RHEA-COMP:10594"/>
        <dbReference type="ChEBI" id="CHEBI:15377"/>
        <dbReference type="ChEBI" id="CHEBI:29950"/>
        <dbReference type="ChEBI" id="CHEBI:30879"/>
        <dbReference type="ChEBI" id="CHEBI:35924"/>
        <dbReference type="ChEBI" id="CHEBI:50058"/>
    </reaction>
</comment>
<comment type="subcellular location">
    <subcellularLocation>
        <location evidence="3">Plastid</location>
        <location evidence="3">Chloroplast</location>
    </subcellularLocation>
</comment>
<comment type="miscellaneous">
    <text evidence="1 3">The active site is a conserved redox-active cysteine residue, the peroxidatic cysteine (C(P)), which makes the nucleophilic attack on the peroxide substrate. The peroxide oxidizes the C(P)-SH to cysteine sulfenic acid (C(P)-SOH), which then reacts with another cysteine residue, the resolving cysteine (C(R)), to form a disulfide bridge. The disulfide is subsequently reduced by an appropriate electron donor to complete the catalytic cycle. In this typical 2-Cys peroxiredoxin, C(R) is provided by the other dimeric subunit to form an intersubunit disulfide (By similarity). Ycf42 lacks the peroxidatic cysteine residue and is therefore probably not active as a peroxidase (Probable).</text>
</comment>
<comment type="similarity">
    <text evidence="3">Belongs to the peroxiredoxin family. AhpC/Prx1 subfamily.</text>
</comment>
<evidence type="ECO:0000250" key="1">
    <source>
        <dbReference type="UniProtKB" id="Q06830"/>
    </source>
</evidence>
<evidence type="ECO:0000255" key="2">
    <source>
        <dbReference type="PROSITE-ProRule" id="PRU00691"/>
    </source>
</evidence>
<evidence type="ECO:0000305" key="3"/>
<gene>
    <name type="primary">ycf42</name>
</gene>
<accession>P49537</accession>
<proteinExistence type="inferred from homology"/>
<sequence>MTNFPKIGKTPPNFLTIGVYKKRLGKIRLSDYRGKKYVILFFYPANFTAISPTELMLLSDRISEFRKLSTQILAISVDSPFSHLQYLLCNREEGGLEDLNYPLVSDLTQTITRDYQVLTDEGLAFPGLFIIDKEGIIQYYTVNNLLCGRNINELLRILESIQYVKENPGYACPVNWNFGDQVFYSHPLKSKIYFKDLYSPKKSS</sequence>
<name>YCF42_TRICV</name>
<geneLocation type="chloroplast"/>